<comment type="function">
    <text evidence="1">Catalyzes the N-acylation of UDP-3-O-acylglucosamine using 3-hydroxyacyl-ACP as the acyl donor. Is involved in the biosynthesis of lipid A, a phosphorylated glycolipid that anchors the lipopolysaccharide to the outer membrane of the cell.</text>
</comment>
<comment type="catalytic activity">
    <reaction evidence="1">
        <text>a UDP-3-O-[(3R)-3-hydroxyacyl]-alpha-D-glucosamine + a (3R)-hydroxyacyl-[ACP] = a UDP-2-N,3-O-bis[(3R)-3-hydroxyacyl]-alpha-D-glucosamine + holo-[ACP] + H(+)</text>
        <dbReference type="Rhea" id="RHEA:53836"/>
        <dbReference type="Rhea" id="RHEA-COMP:9685"/>
        <dbReference type="Rhea" id="RHEA-COMP:9945"/>
        <dbReference type="ChEBI" id="CHEBI:15378"/>
        <dbReference type="ChEBI" id="CHEBI:64479"/>
        <dbReference type="ChEBI" id="CHEBI:78827"/>
        <dbReference type="ChEBI" id="CHEBI:137740"/>
        <dbReference type="ChEBI" id="CHEBI:137748"/>
        <dbReference type="EC" id="2.3.1.191"/>
    </reaction>
</comment>
<comment type="pathway">
    <text evidence="1">Bacterial outer membrane biogenesis; LPS lipid A biosynthesis.</text>
</comment>
<comment type="subunit">
    <text evidence="1">Homotrimer.</text>
</comment>
<comment type="similarity">
    <text evidence="1">Belongs to the transferase hexapeptide repeat family. LpxD subfamily.</text>
</comment>
<keyword id="KW-0012">Acyltransferase</keyword>
<keyword id="KW-0441">Lipid A biosynthesis</keyword>
<keyword id="KW-0444">Lipid biosynthesis</keyword>
<keyword id="KW-0443">Lipid metabolism</keyword>
<keyword id="KW-0677">Repeat</keyword>
<keyword id="KW-0808">Transferase</keyword>
<reference key="1">
    <citation type="journal article" date="2007" name="PLoS Genet.">
        <title>Meningococcal genetic variation mechanisms viewed through comparative analysis of serogroup C strain FAM18.</title>
        <authorList>
            <person name="Bentley S.D."/>
            <person name="Vernikos G.S."/>
            <person name="Snyder L.A.S."/>
            <person name="Churcher C."/>
            <person name="Arrowsmith C."/>
            <person name="Chillingworth T."/>
            <person name="Cronin A."/>
            <person name="Davis P.H."/>
            <person name="Holroyd N.E."/>
            <person name="Jagels K."/>
            <person name="Maddison M."/>
            <person name="Moule S."/>
            <person name="Rabbinowitsch E."/>
            <person name="Sharp S."/>
            <person name="Unwin L."/>
            <person name="Whitehead S."/>
            <person name="Quail M.A."/>
            <person name="Achtman M."/>
            <person name="Barrell B.G."/>
            <person name="Saunders N.J."/>
            <person name="Parkhill J."/>
        </authorList>
    </citation>
    <scope>NUCLEOTIDE SEQUENCE [LARGE SCALE GENOMIC DNA]</scope>
    <source>
        <strain>ATCC 700532 / DSM 15464 / FAM18</strain>
    </source>
</reference>
<organism>
    <name type="scientific">Neisseria meningitidis serogroup C / serotype 2a (strain ATCC 700532 / DSM 15464 / FAM18)</name>
    <dbReference type="NCBI Taxonomy" id="272831"/>
    <lineage>
        <taxon>Bacteria</taxon>
        <taxon>Pseudomonadati</taxon>
        <taxon>Pseudomonadota</taxon>
        <taxon>Betaproteobacteria</taxon>
        <taxon>Neisseriales</taxon>
        <taxon>Neisseriaceae</taxon>
        <taxon>Neisseria</taxon>
    </lineage>
</organism>
<sequence>MIPATYTLSQITARLGGEWRGEDISVTAVRPLADAQAEHISFLANPKYKAEVHDSSAGAVIVSAKAADGFEGRNLIVADDPYLYFAKVARLFSPVVKARGGIHPTAVVEPSATVPASCEIGANAYIGANTVLGEGCRILANAVVQHDCKLGDEVVLHPNAVVYYGCTLGRRVEIHSGAVIGADGFGLAFAGDSWFKIPQTGAVTLGDDVEIGSNTNIDRGAMSDTTVGNGTKIDNQVQIGHNCKIGSHTVIAAKTGISGSVTIGSYCIIGGGVGTVGHIEIADKTTIGGGTSVTHSITESGKHLAGIFPMSTHKEWARNAVYIHRLSEMNKRLKTLEQQLSDAGQDSK</sequence>
<protein>
    <recommendedName>
        <fullName evidence="1">UDP-3-O-acylglucosamine N-acyltransferase</fullName>
        <ecNumber evidence="1">2.3.1.191</ecNumber>
    </recommendedName>
</protein>
<feature type="chain" id="PRO_1000050945" description="UDP-3-O-acylglucosamine N-acyltransferase">
    <location>
        <begin position="1"/>
        <end position="348"/>
    </location>
</feature>
<feature type="active site" description="Proton acceptor" evidence="1">
    <location>
        <position position="241"/>
    </location>
</feature>
<evidence type="ECO:0000255" key="1">
    <source>
        <dbReference type="HAMAP-Rule" id="MF_00523"/>
    </source>
</evidence>
<dbReference type="EC" id="2.3.1.191" evidence="1"/>
<dbReference type="EMBL" id="AM421808">
    <property type="protein sequence ID" value="CAM09490.1"/>
    <property type="molecule type" value="Genomic_DNA"/>
</dbReference>
<dbReference type="RefSeq" id="WP_002236608.1">
    <property type="nucleotide sequence ID" value="NC_008767.1"/>
</dbReference>
<dbReference type="SMR" id="A1KRL2"/>
<dbReference type="KEGG" id="nmc:NMC0171"/>
<dbReference type="HOGENOM" id="CLU_049865_0_1_4"/>
<dbReference type="UniPathway" id="UPA00973"/>
<dbReference type="Proteomes" id="UP000002286">
    <property type="component" value="Chromosome"/>
</dbReference>
<dbReference type="GO" id="GO:0016020">
    <property type="term" value="C:membrane"/>
    <property type="evidence" value="ECO:0007669"/>
    <property type="project" value="GOC"/>
</dbReference>
<dbReference type="GO" id="GO:0016410">
    <property type="term" value="F:N-acyltransferase activity"/>
    <property type="evidence" value="ECO:0007669"/>
    <property type="project" value="InterPro"/>
</dbReference>
<dbReference type="GO" id="GO:0009245">
    <property type="term" value="P:lipid A biosynthetic process"/>
    <property type="evidence" value="ECO:0007669"/>
    <property type="project" value="UniProtKB-UniRule"/>
</dbReference>
<dbReference type="CDD" id="cd03352">
    <property type="entry name" value="LbH_LpxD"/>
    <property type="match status" value="1"/>
</dbReference>
<dbReference type="Gene3D" id="1.20.5.170">
    <property type="match status" value="1"/>
</dbReference>
<dbReference type="Gene3D" id="2.160.10.10">
    <property type="entry name" value="Hexapeptide repeat proteins"/>
    <property type="match status" value="1"/>
</dbReference>
<dbReference type="Gene3D" id="3.40.1390.10">
    <property type="entry name" value="MurE/MurF, N-terminal domain"/>
    <property type="match status" value="1"/>
</dbReference>
<dbReference type="HAMAP" id="MF_00523">
    <property type="entry name" value="LpxD"/>
    <property type="match status" value="1"/>
</dbReference>
<dbReference type="InterPro" id="IPR001451">
    <property type="entry name" value="Hexapep"/>
</dbReference>
<dbReference type="InterPro" id="IPR018357">
    <property type="entry name" value="Hexapep_transf_CS"/>
</dbReference>
<dbReference type="InterPro" id="IPR007691">
    <property type="entry name" value="LpxD"/>
</dbReference>
<dbReference type="InterPro" id="IPR011004">
    <property type="entry name" value="Trimer_LpxA-like_sf"/>
</dbReference>
<dbReference type="InterPro" id="IPR020573">
    <property type="entry name" value="UDP_GlcNAc_AcTrfase_non-rep"/>
</dbReference>
<dbReference type="NCBIfam" id="TIGR01853">
    <property type="entry name" value="lipid_A_lpxD"/>
    <property type="match status" value="1"/>
</dbReference>
<dbReference type="NCBIfam" id="NF002060">
    <property type="entry name" value="PRK00892.1"/>
    <property type="match status" value="1"/>
</dbReference>
<dbReference type="PANTHER" id="PTHR43378">
    <property type="entry name" value="UDP-3-O-ACYLGLUCOSAMINE N-ACYLTRANSFERASE"/>
    <property type="match status" value="1"/>
</dbReference>
<dbReference type="PANTHER" id="PTHR43378:SF2">
    <property type="entry name" value="UDP-3-O-ACYLGLUCOSAMINE N-ACYLTRANSFERASE 1, MITOCHONDRIAL-RELATED"/>
    <property type="match status" value="1"/>
</dbReference>
<dbReference type="Pfam" id="PF00132">
    <property type="entry name" value="Hexapep"/>
    <property type="match status" value="2"/>
</dbReference>
<dbReference type="Pfam" id="PF04613">
    <property type="entry name" value="LpxD"/>
    <property type="match status" value="1"/>
</dbReference>
<dbReference type="SUPFAM" id="SSF51161">
    <property type="entry name" value="Trimeric LpxA-like enzymes"/>
    <property type="match status" value="1"/>
</dbReference>
<dbReference type="PROSITE" id="PS00101">
    <property type="entry name" value="HEXAPEP_TRANSFERASES"/>
    <property type="match status" value="1"/>
</dbReference>
<name>LPXD_NEIMF</name>
<accession>A1KRL2</accession>
<proteinExistence type="inferred from homology"/>
<gene>
    <name evidence="1" type="primary">lpxD</name>
    <name type="ordered locus">NMC0171</name>
</gene>